<protein>
    <recommendedName>
        <fullName evidence="1">Phosphoglycerate kinase</fullName>
        <ecNumber evidence="1">2.7.2.3</ecNumber>
    </recommendedName>
</protein>
<accession>C3P0A6</accession>
<proteinExistence type="inferred from homology"/>
<keyword id="KW-0067">ATP-binding</keyword>
<keyword id="KW-0963">Cytoplasm</keyword>
<keyword id="KW-0324">Glycolysis</keyword>
<keyword id="KW-0418">Kinase</keyword>
<keyword id="KW-0547">Nucleotide-binding</keyword>
<keyword id="KW-0597">Phosphoprotein</keyword>
<keyword id="KW-0808">Transferase</keyword>
<name>PGK_BACAA</name>
<organism>
    <name type="scientific">Bacillus anthracis (strain A0248)</name>
    <dbReference type="NCBI Taxonomy" id="592021"/>
    <lineage>
        <taxon>Bacteria</taxon>
        <taxon>Bacillati</taxon>
        <taxon>Bacillota</taxon>
        <taxon>Bacilli</taxon>
        <taxon>Bacillales</taxon>
        <taxon>Bacillaceae</taxon>
        <taxon>Bacillus</taxon>
        <taxon>Bacillus cereus group</taxon>
    </lineage>
</organism>
<reference key="1">
    <citation type="submission" date="2009-04" db="EMBL/GenBank/DDBJ databases">
        <title>Genome sequence of Bacillus anthracis A0248.</title>
        <authorList>
            <person name="Dodson R.J."/>
            <person name="Munk A.C."/>
            <person name="Bruce D."/>
            <person name="Detter C."/>
            <person name="Tapia R."/>
            <person name="Sutton G."/>
            <person name="Sims D."/>
            <person name="Brettin T."/>
        </authorList>
    </citation>
    <scope>NUCLEOTIDE SEQUENCE [LARGE SCALE GENOMIC DNA]</scope>
    <source>
        <strain>A0248</strain>
    </source>
</reference>
<comment type="catalytic activity">
    <reaction evidence="1">
        <text>(2R)-3-phosphoglycerate + ATP = (2R)-3-phospho-glyceroyl phosphate + ADP</text>
        <dbReference type="Rhea" id="RHEA:14801"/>
        <dbReference type="ChEBI" id="CHEBI:30616"/>
        <dbReference type="ChEBI" id="CHEBI:57604"/>
        <dbReference type="ChEBI" id="CHEBI:58272"/>
        <dbReference type="ChEBI" id="CHEBI:456216"/>
        <dbReference type="EC" id="2.7.2.3"/>
    </reaction>
</comment>
<comment type="pathway">
    <text evidence="1">Carbohydrate degradation; glycolysis; pyruvate from D-glyceraldehyde 3-phosphate: step 2/5.</text>
</comment>
<comment type="subunit">
    <text evidence="1">Monomer.</text>
</comment>
<comment type="subcellular location">
    <subcellularLocation>
        <location evidence="1">Cytoplasm</location>
    </subcellularLocation>
</comment>
<comment type="similarity">
    <text evidence="1">Belongs to the phosphoglycerate kinase family.</text>
</comment>
<sequence>MNKKSIRDVDLKGKRVFCRVDFNVPMKEGKITDETRIRAALPTIQYLVEQGAKVILASHLGRPKGQAVEELRLTPVAARLGELLGKDVKKADEAFGPVAQEMVAAMNEGDVLVLENVRFYAGEEKNDAELAKEFAALADIFVNDAFGAAHRAHASTAGIADYLPAVSGLLMEKELEVLGKALSNPERPFTAIIGGAKVKDKIGLIRHLLDKVDNLIIGGGLAYTFVKALGHEIGLSLCEDDKIELAKEFMQLAKEKGVNFYMPVDVVITEEFSETATTKIVGIDSIPSNWEGVDIGPKTREIYADVIKNSKLVVWNGPMGVFEMTPFAEGTKAVGQALADAEGTYSVIGGGDSAAAVEKFGMADKMSHISTGGGASLEFMEGKELPGVVCLNDK</sequence>
<evidence type="ECO:0000255" key="1">
    <source>
        <dbReference type="HAMAP-Rule" id="MF_00145"/>
    </source>
</evidence>
<gene>
    <name evidence="1" type="primary">pgk</name>
    <name type="ordered locus">BAA_5397</name>
</gene>
<feature type="chain" id="PRO_1000192794" description="Phosphoglycerate kinase">
    <location>
        <begin position="1"/>
        <end position="394"/>
    </location>
</feature>
<feature type="binding site" evidence="1">
    <location>
        <begin position="21"/>
        <end position="23"/>
    </location>
    <ligand>
        <name>substrate</name>
    </ligand>
</feature>
<feature type="binding site" evidence="1">
    <location>
        <position position="36"/>
    </location>
    <ligand>
        <name>substrate</name>
    </ligand>
</feature>
<feature type="binding site" evidence="1">
    <location>
        <begin position="59"/>
        <end position="62"/>
    </location>
    <ligand>
        <name>substrate</name>
    </ligand>
</feature>
<feature type="binding site" evidence="1">
    <location>
        <position position="118"/>
    </location>
    <ligand>
        <name>substrate</name>
    </ligand>
</feature>
<feature type="binding site" evidence="1">
    <location>
        <position position="151"/>
    </location>
    <ligand>
        <name>substrate</name>
    </ligand>
</feature>
<feature type="binding site" evidence="1">
    <location>
        <position position="201"/>
    </location>
    <ligand>
        <name>ATP</name>
        <dbReference type="ChEBI" id="CHEBI:30616"/>
    </ligand>
</feature>
<feature type="binding site" evidence="1">
    <location>
        <position position="292"/>
    </location>
    <ligand>
        <name>ATP</name>
        <dbReference type="ChEBI" id="CHEBI:30616"/>
    </ligand>
</feature>
<feature type="binding site" evidence="1">
    <location>
        <position position="323"/>
    </location>
    <ligand>
        <name>ATP</name>
        <dbReference type="ChEBI" id="CHEBI:30616"/>
    </ligand>
</feature>
<feature type="binding site" evidence="1">
    <location>
        <begin position="350"/>
        <end position="353"/>
    </location>
    <ligand>
        <name>ATP</name>
        <dbReference type="ChEBI" id="CHEBI:30616"/>
    </ligand>
</feature>
<feature type="modified residue" description="Phosphoserine" evidence="1">
    <location>
        <position position="183"/>
    </location>
</feature>
<feature type="modified residue" description="Phosphothreonine" evidence="1">
    <location>
        <position position="299"/>
    </location>
</feature>
<dbReference type="EC" id="2.7.2.3" evidence="1"/>
<dbReference type="EMBL" id="CP001598">
    <property type="protein sequence ID" value="ACQ49979.1"/>
    <property type="molecule type" value="Genomic_DNA"/>
</dbReference>
<dbReference type="RefSeq" id="WP_001036337.1">
    <property type="nucleotide sequence ID" value="NC_012659.1"/>
</dbReference>
<dbReference type="SMR" id="C3P0A6"/>
<dbReference type="GeneID" id="45024970"/>
<dbReference type="KEGG" id="bai:BAA_5397"/>
<dbReference type="HOGENOM" id="CLU_025427_0_2_9"/>
<dbReference type="UniPathway" id="UPA00109">
    <property type="reaction ID" value="UER00185"/>
</dbReference>
<dbReference type="GO" id="GO:0005829">
    <property type="term" value="C:cytosol"/>
    <property type="evidence" value="ECO:0007669"/>
    <property type="project" value="TreeGrafter"/>
</dbReference>
<dbReference type="GO" id="GO:0043531">
    <property type="term" value="F:ADP binding"/>
    <property type="evidence" value="ECO:0007669"/>
    <property type="project" value="TreeGrafter"/>
</dbReference>
<dbReference type="GO" id="GO:0005524">
    <property type="term" value="F:ATP binding"/>
    <property type="evidence" value="ECO:0007669"/>
    <property type="project" value="UniProtKB-KW"/>
</dbReference>
<dbReference type="GO" id="GO:0004618">
    <property type="term" value="F:phosphoglycerate kinase activity"/>
    <property type="evidence" value="ECO:0007669"/>
    <property type="project" value="UniProtKB-UniRule"/>
</dbReference>
<dbReference type="GO" id="GO:0006094">
    <property type="term" value="P:gluconeogenesis"/>
    <property type="evidence" value="ECO:0007669"/>
    <property type="project" value="TreeGrafter"/>
</dbReference>
<dbReference type="GO" id="GO:0006096">
    <property type="term" value="P:glycolytic process"/>
    <property type="evidence" value="ECO:0007669"/>
    <property type="project" value="UniProtKB-UniRule"/>
</dbReference>
<dbReference type="CDD" id="cd00318">
    <property type="entry name" value="Phosphoglycerate_kinase"/>
    <property type="match status" value="1"/>
</dbReference>
<dbReference type="FunFam" id="3.40.50.1260:FF:000001">
    <property type="entry name" value="Phosphoglycerate kinase"/>
    <property type="match status" value="1"/>
</dbReference>
<dbReference type="FunFam" id="3.40.50.1260:FF:000002">
    <property type="entry name" value="Phosphoglycerate kinase"/>
    <property type="match status" value="1"/>
</dbReference>
<dbReference type="Gene3D" id="3.40.50.1260">
    <property type="entry name" value="Phosphoglycerate kinase, N-terminal domain"/>
    <property type="match status" value="2"/>
</dbReference>
<dbReference type="HAMAP" id="MF_00145">
    <property type="entry name" value="Phosphoglyc_kinase"/>
    <property type="match status" value="1"/>
</dbReference>
<dbReference type="InterPro" id="IPR001576">
    <property type="entry name" value="Phosphoglycerate_kinase"/>
</dbReference>
<dbReference type="InterPro" id="IPR015911">
    <property type="entry name" value="Phosphoglycerate_kinase_CS"/>
</dbReference>
<dbReference type="InterPro" id="IPR015824">
    <property type="entry name" value="Phosphoglycerate_kinase_N"/>
</dbReference>
<dbReference type="InterPro" id="IPR036043">
    <property type="entry name" value="Phosphoglycerate_kinase_sf"/>
</dbReference>
<dbReference type="PANTHER" id="PTHR11406">
    <property type="entry name" value="PHOSPHOGLYCERATE KINASE"/>
    <property type="match status" value="1"/>
</dbReference>
<dbReference type="PANTHER" id="PTHR11406:SF23">
    <property type="entry name" value="PHOSPHOGLYCERATE KINASE 1, CHLOROPLASTIC-RELATED"/>
    <property type="match status" value="1"/>
</dbReference>
<dbReference type="Pfam" id="PF00162">
    <property type="entry name" value="PGK"/>
    <property type="match status" value="1"/>
</dbReference>
<dbReference type="PIRSF" id="PIRSF000724">
    <property type="entry name" value="Pgk"/>
    <property type="match status" value="1"/>
</dbReference>
<dbReference type="PRINTS" id="PR00477">
    <property type="entry name" value="PHGLYCKINASE"/>
</dbReference>
<dbReference type="SUPFAM" id="SSF53748">
    <property type="entry name" value="Phosphoglycerate kinase"/>
    <property type="match status" value="1"/>
</dbReference>
<dbReference type="PROSITE" id="PS00111">
    <property type="entry name" value="PGLYCERATE_KINASE"/>
    <property type="match status" value="1"/>
</dbReference>